<gene>
    <name evidence="1" type="primary">engB</name>
    <name type="ordered locus">NGO_0100</name>
</gene>
<name>ENGB_NEIG1</name>
<sequence length="209" mass="23600">MNLFQNAKFFTTVNHLKDLPDTPLEIAFVGRSNAGKSSAINTLTNHVRLAYVSKTPGRTQHINFFELQNGNFMVDLPGYGYAQVPEAVRAHWVNLLGDYLRHRKQLIGLVLIMDARHPLKELDIRMLDFFHTTGRPVHILLSKADKLSKNEQIKTLSQVKKLLKPYSDRQNISVQLFSSLKKQGIDEANRTVGSWFDAADAAASSPEEN</sequence>
<dbReference type="EMBL" id="AE004969">
    <property type="protein sequence ID" value="AAW88861.2"/>
    <property type="molecule type" value="Genomic_DNA"/>
</dbReference>
<dbReference type="RefSeq" id="YP_207273.2">
    <property type="nucleotide sequence ID" value="NC_002946.2"/>
</dbReference>
<dbReference type="SMR" id="Q5FAC6"/>
<dbReference type="STRING" id="242231.NGO_0100"/>
<dbReference type="KEGG" id="ngo:NGO_0100"/>
<dbReference type="PATRIC" id="fig|242231.10.peg.132"/>
<dbReference type="HOGENOM" id="CLU_033732_1_1_4"/>
<dbReference type="Proteomes" id="UP000000535">
    <property type="component" value="Chromosome"/>
</dbReference>
<dbReference type="GO" id="GO:0005829">
    <property type="term" value="C:cytosol"/>
    <property type="evidence" value="ECO:0007669"/>
    <property type="project" value="TreeGrafter"/>
</dbReference>
<dbReference type="GO" id="GO:0005525">
    <property type="term" value="F:GTP binding"/>
    <property type="evidence" value="ECO:0007669"/>
    <property type="project" value="UniProtKB-UniRule"/>
</dbReference>
<dbReference type="GO" id="GO:0046872">
    <property type="term" value="F:metal ion binding"/>
    <property type="evidence" value="ECO:0007669"/>
    <property type="project" value="UniProtKB-KW"/>
</dbReference>
<dbReference type="GO" id="GO:0000917">
    <property type="term" value="P:division septum assembly"/>
    <property type="evidence" value="ECO:0007669"/>
    <property type="project" value="UniProtKB-KW"/>
</dbReference>
<dbReference type="CDD" id="cd01876">
    <property type="entry name" value="YihA_EngB"/>
    <property type="match status" value="1"/>
</dbReference>
<dbReference type="FunFam" id="3.40.50.300:FF:000098">
    <property type="entry name" value="Probable GTP-binding protein EngB"/>
    <property type="match status" value="1"/>
</dbReference>
<dbReference type="Gene3D" id="3.40.50.300">
    <property type="entry name" value="P-loop containing nucleotide triphosphate hydrolases"/>
    <property type="match status" value="1"/>
</dbReference>
<dbReference type="HAMAP" id="MF_00321">
    <property type="entry name" value="GTPase_EngB"/>
    <property type="match status" value="1"/>
</dbReference>
<dbReference type="InterPro" id="IPR030393">
    <property type="entry name" value="G_ENGB_dom"/>
</dbReference>
<dbReference type="InterPro" id="IPR006073">
    <property type="entry name" value="GTP-bd"/>
</dbReference>
<dbReference type="InterPro" id="IPR019987">
    <property type="entry name" value="GTP-bd_ribosome_bio_YsxC"/>
</dbReference>
<dbReference type="InterPro" id="IPR027417">
    <property type="entry name" value="P-loop_NTPase"/>
</dbReference>
<dbReference type="NCBIfam" id="TIGR03598">
    <property type="entry name" value="GTPase_YsxC"/>
    <property type="match status" value="1"/>
</dbReference>
<dbReference type="PANTHER" id="PTHR11649:SF13">
    <property type="entry name" value="ENGB-TYPE G DOMAIN-CONTAINING PROTEIN"/>
    <property type="match status" value="1"/>
</dbReference>
<dbReference type="PANTHER" id="PTHR11649">
    <property type="entry name" value="MSS1/TRME-RELATED GTP-BINDING PROTEIN"/>
    <property type="match status" value="1"/>
</dbReference>
<dbReference type="Pfam" id="PF01926">
    <property type="entry name" value="MMR_HSR1"/>
    <property type="match status" value="1"/>
</dbReference>
<dbReference type="SUPFAM" id="SSF52540">
    <property type="entry name" value="P-loop containing nucleoside triphosphate hydrolases"/>
    <property type="match status" value="1"/>
</dbReference>
<dbReference type="PROSITE" id="PS51706">
    <property type="entry name" value="G_ENGB"/>
    <property type="match status" value="1"/>
</dbReference>
<proteinExistence type="inferred from homology"/>
<organism>
    <name type="scientific">Neisseria gonorrhoeae (strain ATCC 700825 / FA 1090)</name>
    <dbReference type="NCBI Taxonomy" id="242231"/>
    <lineage>
        <taxon>Bacteria</taxon>
        <taxon>Pseudomonadati</taxon>
        <taxon>Pseudomonadota</taxon>
        <taxon>Betaproteobacteria</taxon>
        <taxon>Neisseriales</taxon>
        <taxon>Neisseriaceae</taxon>
        <taxon>Neisseria</taxon>
    </lineage>
</organism>
<protein>
    <recommendedName>
        <fullName evidence="1">Probable GTP-binding protein EngB</fullName>
    </recommendedName>
</protein>
<keyword id="KW-0131">Cell cycle</keyword>
<keyword id="KW-0132">Cell division</keyword>
<keyword id="KW-0342">GTP-binding</keyword>
<keyword id="KW-0460">Magnesium</keyword>
<keyword id="KW-0479">Metal-binding</keyword>
<keyword id="KW-0547">Nucleotide-binding</keyword>
<keyword id="KW-1185">Reference proteome</keyword>
<keyword id="KW-0717">Septation</keyword>
<evidence type="ECO:0000255" key="1">
    <source>
        <dbReference type="HAMAP-Rule" id="MF_00321"/>
    </source>
</evidence>
<comment type="function">
    <text evidence="1">Necessary for normal cell division and for the maintenance of normal septation.</text>
</comment>
<comment type="cofactor">
    <cofactor evidence="1">
        <name>Mg(2+)</name>
        <dbReference type="ChEBI" id="CHEBI:18420"/>
    </cofactor>
</comment>
<comment type="similarity">
    <text evidence="1">Belongs to the TRAFAC class TrmE-Era-EngA-EngB-Septin-like GTPase superfamily. EngB GTPase family.</text>
</comment>
<accession>Q5FAC6</accession>
<reference key="1">
    <citation type="submission" date="2003-03" db="EMBL/GenBank/DDBJ databases">
        <title>The complete genome sequence of Neisseria gonorrhoeae.</title>
        <authorList>
            <person name="Lewis L.A."/>
            <person name="Gillaspy A.F."/>
            <person name="McLaughlin R.E."/>
            <person name="Gipson M."/>
            <person name="Ducey T.F."/>
            <person name="Ownbey T."/>
            <person name="Hartman K."/>
            <person name="Nydick C."/>
            <person name="Carson M.B."/>
            <person name="Vaughn J."/>
            <person name="Thomson C."/>
            <person name="Song L."/>
            <person name="Lin S."/>
            <person name="Yuan X."/>
            <person name="Najar F."/>
            <person name="Zhan M."/>
            <person name="Ren Q."/>
            <person name="Zhu H."/>
            <person name="Qi S."/>
            <person name="Kenton S.M."/>
            <person name="Lai H."/>
            <person name="White J.D."/>
            <person name="Clifton S."/>
            <person name="Roe B.A."/>
            <person name="Dyer D.W."/>
        </authorList>
    </citation>
    <scope>NUCLEOTIDE SEQUENCE [LARGE SCALE GENOMIC DNA]</scope>
    <source>
        <strain>ATCC 700825 / FA 1090</strain>
    </source>
</reference>
<feature type="chain" id="PRO_0000266903" description="Probable GTP-binding protein EngB">
    <location>
        <begin position="1"/>
        <end position="209"/>
    </location>
</feature>
<feature type="domain" description="EngB-type G" evidence="1">
    <location>
        <begin position="22"/>
        <end position="198"/>
    </location>
</feature>
<feature type="binding site" evidence="1">
    <location>
        <position position="37"/>
    </location>
    <ligand>
        <name>Mg(2+)</name>
        <dbReference type="ChEBI" id="CHEBI:18420"/>
    </ligand>
</feature>
<feature type="binding site" evidence="1">
    <location>
        <position position="59"/>
    </location>
    <ligand>
        <name>Mg(2+)</name>
        <dbReference type="ChEBI" id="CHEBI:18420"/>
    </ligand>
</feature>